<reference key="1">
    <citation type="journal article" date="2015" name="Genome Announc.">
        <title>Draft genome sequence of the cellulolytic fungus Chaetomium globosum.</title>
        <authorList>
            <person name="Cuomo C.A."/>
            <person name="Untereiner W.A."/>
            <person name="Ma L.-J."/>
            <person name="Grabherr M."/>
            <person name="Birren B.W."/>
        </authorList>
    </citation>
    <scope>NUCLEOTIDE SEQUENCE [LARGE SCALE GENOMIC DNA]</scope>
    <source>
        <strain>ATCC 6205 / CBS 148.51 / DSM 1962 / NBRC 6347 / NRRL 1970</strain>
    </source>
</reference>
<reference key="2">
    <citation type="journal article" date="2015" name="ChemBioChem">
        <title>Involvement of lipocalin-like CghA in decalin-forming stereoselective intramolecular [4+2] cycloaddition.</title>
        <authorList>
            <person name="Sato M."/>
            <person name="Yagishita F."/>
            <person name="Mino T."/>
            <person name="Uchiyama N."/>
            <person name="Patel A."/>
            <person name="Chooi Y.H."/>
            <person name="Goda Y."/>
            <person name="Xu W."/>
            <person name="Noguchi H."/>
            <person name="Yamamoto T."/>
            <person name="Hotta K."/>
            <person name="Houk K.N."/>
            <person name="Tang Y."/>
            <person name="Watanabe K."/>
        </authorList>
    </citation>
    <scope>FUNCTION</scope>
    <scope>PATHWAY</scope>
</reference>
<name>CGHE_CHAGB</name>
<proteinExistence type="predicted"/>
<organism>
    <name type="scientific">Chaetomium globosum (strain ATCC 6205 / CBS 148.51 / DSM 1962 / NBRC 6347 / NRRL 1970)</name>
    <name type="common">Soil fungus</name>
    <dbReference type="NCBI Taxonomy" id="306901"/>
    <lineage>
        <taxon>Eukaryota</taxon>
        <taxon>Fungi</taxon>
        <taxon>Dikarya</taxon>
        <taxon>Ascomycota</taxon>
        <taxon>Pezizomycotina</taxon>
        <taxon>Sordariomycetes</taxon>
        <taxon>Sordariomycetidae</taxon>
        <taxon>Sordariales</taxon>
        <taxon>Chaetomiaceae</taxon>
        <taxon>Chaetomium</taxon>
    </lineage>
</organism>
<gene>
    <name evidence="3" type="primary">cghE</name>
    <name type="ORF">CHGG_02372</name>
</gene>
<comment type="function">
    <text evidence="2">Part of the gene cluster that mediates the biosynthesis of the tetramic acid Sch210972, a potential anti-HIV fungal natural product that contains a decalin core (PubMed:26360642). The PKS module of cghG together with the enoylreductase cghC catalyze the formation of the polyketide unit which is then conjugated to 4-hydroxyl-4-methyl glutamate (HMG) by the condensation domain of the cghG NRPS module (PubMed:26360642). One unique structural feature of Sch210972 is the tetramic acid motif proposed to be derived from the non-proteinogenic amino acid HMG, by a Dieckmann-type condensation catalyzed by the reductase domain of cghG (PubMed:26360642). The aldolase cghB catalyzes the aldol condensation of 2 molecules of pyruvic acid to yield the intermediate 4-hydroxyl-4-methyl-2-oxoglutarate (HMOG), which can then be stereoselectively transaminated by an unidentified enzyme to form HMG (PubMed:26360642). The Diels-Alderase cghA then uses the Dieckmann product released by cghG as substrate and catalyzes the Diels-Alder cycloaddition to form the decalin ring of Sch210972 (PubMed:26360642). CghA also suppresses the nonenzymatic formation of the alternative stereoisomer (PubMed:26360642).</text>
</comment>
<comment type="pathway">
    <text evidence="4">Secondary metabolite biosynthesis.</text>
</comment>
<sequence length="137" mass="14594">MTKYTSVNSSLPSLPRQTTPTRPATQTGRWDRMGMQTGNTPSSPLGFETKGSLNGSPTLRTTLDTSLSGTRSHPALRATRWMMGVNDIDSIQGDEDHPHDPGPDSDAKKRCASGKAPKDRPTSSVAVASTIRPPCCG</sequence>
<feature type="chain" id="PRO_0000453357" description="Sch210972 biosynthesis cluster protein E">
    <location>
        <begin position="1"/>
        <end position="137"/>
    </location>
</feature>
<feature type="region of interest" description="Disordered" evidence="1">
    <location>
        <begin position="1"/>
        <end position="137"/>
    </location>
</feature>
<feature type="compositionally biased region" description="Polar residues" evidence="1">
    <location>
        <begin position="1"/>
        <end position="12"/>
    </location>
</feature>
<feature type="compositionally biased region" description="Low complexity" evidence="1">
    <location>
        <begin position="15"/>
        <end position="27"/>
    </location>
</feature>
<feature type="compositionally biased region" description="Polar residues" evidence="1">
    <location>
        <begin position="51"/>
        <end position="71"/>
    </location>
</feature>
<feature type="compositionally biased region" description="Basic and acidic residues" evidence="1">
    <location>
        <begin position="94"/>
        <end position="109"/>
    </location>
</feature>
<evidence type="ECO:0000256" key="1">
    <source>
        <dbReference type="SAM" id="MobiDB-lite"/>
    </source>
</evidence>
<evidence type="ECO:0000269" key="2">
    <source>
    </source>
</evidence>
<evidence type="ECO:0000303" key="3">
    <source>
    </source>
</evidence>
<evidence type="ECO:0000305" key="4">
    <source>
    </source>
</evidence>
<dbReference type="EMBL" id="CH408030">
    <property type="protein sequence ID" value="EAQ90437.1"/>
    <property type="molecule type" value="Genomic_DNA"/>
</dbReference>
<dbReference type="RefSeq" id="XP_001228888.1">
    <property type="nucleotide sequence ID" value="XM_001228887.1"/>
</dbReference>
<dbReference type="GeneID" id="4388357"/>
<dbReference type="VEuPathDB" id="FungiDB:CHGG_02372"/>
<dbReference type="HOGENOM" id="CLU_1864896_0_0_1"/>
<dbReference type="InParanoid" id="Q2HBN2"/>
<dbReference type="Proteomes" id="UP000001056">
    <property type="component" value="Unassembled WGS sequence"/>
</dbReference>
<protein>
    <recommendedName>
        <fullName evidence="3">Sch210972 biosynthesis cluster protein E</fullName>
    </recommendedName>
</protein>
<accession>Q2HBN2</accession>
<keyword id="KW-1185">Reference proteome</keyword>